<sequence>MIKVGIVGATGYTGLELIRLLNNHPNAKIIALCSRVNTGKAVIEEFPSLIGYVDLDFIIPDDKTLFECDVIFFATPHGVAMNSVGQFLDKGIKIIDLSADFRIKDSSTWSKWYGIVHTQSALLKNAVYGLPEVYSSQIKNATLVANPGCYPTAIILALKPLLKANSINTKSIIADCKSGVSGAGRNSNIATLFCEVNESLKPYNVNQHRHKPEAQQVLTDIANTDVDFIFTPHLIPMTRGMLASVYVDLTKDIDVQELFKNHYQDNRFVHVLSVGVYPQTKSVKGTNNCHIGIQKSNNKLIIMTVIDNINKGASGQAIQNMNLMFGIDEGLGLEQIGLLP</sequence>
<comment type="function">
    <text evidence="1">Catalyzes the NADPH-dependent reduction of N-acetyl-5-glutamyl phosphate to yield N-acetyl-L-glutamate 5-semialdehyde.</text>
</comment>
<comment type="catalytic activity">
    <reaction evidence="1">
        <text>N-acetyl-L-glutamate 5-semialdehyde + phosphate + NADP(+) = N-acetyl-L-glutamyl 5-phosphate + NADPH + H(+)</text>
        <dbReference type="Rhea" id="RHEA:21588"/>
        <dbReference type="ChEBI" id="CHEBI:15378"/>
        <dbReference type="ChEBI" id="CHEBI:29123"/>
        <dbReference type="ChEBI" id="CHEBI:43474"/>
        <dbReference type="ChEBI" id="CHEBI:57783"/>
        <dbReference type="ChEBI" id="CHEBI:57936"/>
        <dbReference type="ChEBI" id="CHEBI:58349"/>
        <dbReference type="EC" id="1.2.1.38"/>
    </reaction>
</comment>
<comment type="pathway">
    <text evidence="1">Amino-acid biosynthesis; L-arginine biosynthesis; N(2)-acetyl-L-ornithine from L-glutamate: step 3/4.</text>
</comment>
<comment type="subcellular location">
    <subcellularLocation>
        <location evidence="1">Cytoplasm</location>
    </subcellularLocation>
</comment>
<comment type="similarity">
    <text evidence="1">Belongs to the NAGSA dehydrogenase family. Type 1 subfamily.</text>
</comment>
<proteinExistence type="inferred from homology"/>
<gene>
    <name evidence="1" type="primary">argC</name>
    <name type="ordered locus">Rmag_1061</name>
</gene>
<name>ARGC_RUTMC</name>
<organism>
    <name type="scientific">Ruthia magnifica subsp. Calyptogena magnifica</name>
    <dbReference type="NCBI Taxonomy" id="413404"/>
    <lineage>
        <taxon>Bacteria</taxon>
        <taxon>Pseudomonadati</taxon>
        <taxon>Pseudomonadota</taxon>
        <taxon>Gammaproteobacteria</taxon>
        <taxon>Candidatus Pseudothioglobaceae</taxon>
        <taxon>Candidatus Ruthturnera</taxon>
    </lineage>
</organism>
<accession>A1AXV8</accession>
<dbReference type="EC" id="1.2.1.38" evidence="1"/>
<dbReference type="EMBL" id="CP000488">
    <property type="protein sequence ID" value="ABL02765.1"/>
    <property type="molecule type" value="Genomic_DNA"/>
</dbReference>
<dbReference type="RefSeq" id="WP_011738390.1">
    <property type="nucleotide sequence ID" value="NC_008610.1"/>
</dbReference>
<dbReference type="SMR" id="A1AXV8"/>
<dbReference type="STRING" id="413404.Rmag_1061"/>
<dbReference type="KEGG" id="rma:Rmag_1061"/>
<dbReference type="eggNOG" id="COG0002">
    <property type="taxonomic scope" value="Bacteria"/>
</dbReference>
<dbReference type="HOGENOM" id="CLU_006384_0_1_6"/>
<dbReference type="OrthoDB" id="9801289at2"/>
<dbReference type="UniPathway" id="UPA00068">
    <property type="reaction ID" value="UER00108"/>
</dbReference>
<dbReference type="Proteomes" id="UP000002587">
    <property type="component" value="Chromosome"/>
</dbReference>
<dbReference type="GO" id="GO:0005737">
    <property type="term" value="C:cytoplasm"/>
    <property type="evidence" value="ECO:0007669"/>
    <property type="project" value="UniProtKB-SubCell"/>
</dbReference>
<dbReference type="GO" id="GO:0003942">
    <property type="term" value="F:N-acetyl-gamma-glutamyl-phosphate reductase activity"/>
    <property type="evidence" value="ECO:0007669"/>
    <property type="project" value="UniProtKB-UniRule"/>
</dbReference>
<dbReference type="GO" id="GO:0051287">
    <property type="term" value="F:NAD binding"/>
    <property type="evidence" value="ECO:0007669"/>
    <property type="project" value="InterPro"/>
</dbReference>
<dbReference type="GO" id="GO:0070401">
    <property type="term" value="F:NADP+ binding"/>
    <property type="evidence" value="ECO:0007669"/>
    <property type="project" value="InterPro"/>
</dbReference>
<dbReference type="GO" id="GO:0006526">
    <property type="term" value="P:L-arginine biosynthetic process"/>
    <property type="evidence" value="ECO:0007669"/>
    <property type="project" value="UniProtKB-UniRule"/>
</dbReference>
<dbReference type="CDD" id="cd23934">
    <property type="entry name" value="AGPR_1_C"/>
    <property type="match status" value="1"/>
</dbReference>
<dbReference type="CDD" id="cd17895">
    <property type="entry name" value="AGPR_1_N"/>
    <property type="match status" value="1"/>
</dbReference>
<dbReference type="FunFam" id="3.30.360.10:FF:000014">
    <property type="entry name" value="N-acetyl-gamma-glutamyl-phosphate reductase"/>
    <property type="match status" value="1"/>
</dbReference>
<dbReference type="Gene3D" id="3.30.360.10">
    <property type="entry name" value="Dihydrodipicolinate Reductase, domain 2"/>
    <property type="match status" value="1"/>
</dbReference>
<dbReference type="Gene3D" id="3.40.50.720">
    <property type="entry name" value="NAD(P)-binding Rossmann-like Domain"/>
    <property type="match status" value="1"/>
</dbReference>
<dbReference type="HAMAP" id="MF_00150">
    <property type="entry name" value="ArgC_type1"/>
    <property type="match status" value="1"/>
</dbReference>
<dbReference type="InterPro" id="IPR023013">
    <property type="entry name" value="AGPR_AS"/>
</dbReference>
<dbReference type="InterPro" id="IPR000706">
    <property type="entry name" value="AGPR_type-1"/>
</dbReference>
<dbReference type="InterPro" id="IPR036291">
    <property type="entry name" value="NAD(P)-bd_dom_sf"/>
</dbReference>
<dbReference type="InterPro" id="IPR050085">
    <property type="entry name" value="NAGSA_dehydrogenase"/>
</dbReference>
<dbReference type="InterPro" id="IPR000534">
    <property type="entry name" value="Semialdehyde_DH_NAD-bd"/>
</dbReference>
<dbReference type="NCBIfam" id="TIGR01850">
    <property type="entry name" value="argC"/>
    <property type="match status" value="1"/>
</dbReference>
<dbReference type="PANTHER" id="PTHR32338:SF10">
    <property type="entry name" value="N-ACETYL-GAMMA-GLUTAMYL-PHOSPHATE REDUCTASE, CHLOROPLASTIC-RELATED"/>
    <property type="match status" value="1"/>
</dbReference>
<dbReference type="PANTHER" id="PTHR32338">
    <property type="entry name" value="N-ACETYL-GAMMA-GLUTAMYL-PHOSPHATE REDUCTASE, CHLOROPLASTIC-RELATED-RELATED"/>
    <property type="match status" value="1"/>
</dbReference>
<dbReference type="Pfam" id="PF01118">
    <property type="entry name" value="Semialdhyde_dh"/>
    <property type="match status" value="1"/>
</dbReference>
<dbReference type="Pfam" id="PF22698">
    <property type="entry name" value="Semialdhyde_dhC_1"/>
    <property type="match status" value="1"/>
</dbReference>
<dbReference type="SMART" id="SM00859">
    <property type="entry name" value="Semialdhyde_dh"/>
    <property type="match status" value="1"/>
</dbReference>
<dbReference type="SUPFAM" id="SSF55347">
    <property type="entry name" value="Glyceraldehyde-3-phosphate dehydrogenase-like, C-terminal domain"/>
    <property type="match status" value="1"/>
</dbReference>
<dbReference type="SUPFAM" id="SSF51735">
    <property type="entry name" value="NAD(P)-binding Rossmann-fold domains"/>
    <property type="match status" value="1"/>
</dbReference>
<dbReference type="PROSITE" id="PS01224">
    <property type="entry name" value="ARGC"/>
    <property type="match status" value="1"/>
</dbReference>
<evidence type="ECO:0000255" key="1">
    <source>
        <dbReference type="HAMAP-Rule" id="MF_00150"/>
    </source>
</evidence>
<keyword id="KW-0028">Amino-acid biosynthesis</keyword>
<keyword id="KW-0055">Arginine biosynthesis</keyword>
<keyword id="KW-0963">Cytoplasm</keyword>
<keyword id="KW-0521">NADP</keyword>
<keyword id="KW-0560">Oxidoreductase</keyword>
<protein>
    <recommendedName>
        <fullName evidence="1">N-acetyl-gamma-glutamyl-phosphate reductase</fullName>
        <shortName evidence="1">AGPR</shortName>
        <ecNumber evidence="1">1.2.1.38</ecNumber>
    </recommendedName>
    <alternativeName>
        <fullName evidence="1">N-acetyl-glutamate semialdehyde dehydrogenase</fullName>
        <shortName evidence="1">NAGSA dehydrogenase</shortName>
    </alternativeName>
</protein>
<feature type="chain" id="PRO_1000011053" description="N-acetyl-gamma-glutamyl-phosphate reductase">
    <location>
        <begin position="1"/>
        <end position="340"/>
    </location>
</feature>
<feature type="active site" evidence="1">
    <location>
        <position position="149"/>
    </location>
</feature>
<reference key="1">
    <citation type="journal article" date="2007" name="Science">
        <title>The Calyptogena magnifica chemoautotrophic symbiont genome.</title>
        <authorList>
            <person name="Newton I.L.G."/>
            <person name="Woyke T."/>
            <person name="Auchtung T.A."/>
            <person name="Dilly G.F."/>
            <person name="Dutton R.J."/>
            <person name="Fisher M.C."/>
            <person name="Fontanez K.M."/>
            <person name="Lau E."/>
            <person name="Stewart F.J."/>
            <person name="Richardson P.M."/>
            <person name="Barry K.W."/>
            <person name="Saunders E."/>
            <person name="Detter J.C."/>
            <person name="Wu D."/>
            <person name="Eisen J.A."/>
            <person name="Cavanaugh C.M."/>
        </authorList>
    </citation>
    <scope>NUCLEOTIDE SEQUENCE [LARGE SCALE GENOMIC DNA]</scope>
</reference>